<accession>P54443</accession>
<evidence type="ECO:0000255" key="1">
    <source>
        <dbReference type="PROSITE-ProRule" id="PRU00169"/>
    </source>
</evidence>
<evidence type="ECO:0000255" key="2">
    <source>
        <dbReference type="PROSITE-ProRule" id="PRU01091"/>
    </source>
</evidence>
<evidence type="ECO:0000269" key="3">
    <source>
    </source>
</evidence>
<evidence type="ECO:0000305" key="4"/>
<feature type="chain" id="PRO_0000081396" description="Uncharacterized transcriptional regulatory protein YrkP">
    <location>
        <begin position="1"/>
        <end position="231"/>
    </location>
</feature>
<feature type="domain" description="Response regulatory" evidence="1">
    <location>
        <begin position="4"/>
        <end position="116"/>
    </location>
</feature>
<feature type="DNA-binding region" description="OmpR/PhoB-type" evidence="2">
    <location>
        <begin position="129"/>
        <end position="230"/>
    </location>
</feature>
<feature type="modified residue" description="4-aspartylphosphate" evidence="1">
    <location>
        <position position="52"/>
    </location>
</feature>
<gene>
    <name type="primary">yrkP</name>
    <name type="ordered locus">BSU26430</name>
</gene>
<reference key="1">
    <citation type="journal article" date="1996" name="Microbiology">
        <title>Systematic sequencing of the 283 kb 210 degrees-232 degrees region of the Bacillus subtilis genome containing the skin element and many sporulation genes.</title>
        <authorList>
            <person name="Mizuno M."/>
            <person name="Masuda S."/>
            <person name="Takemaru K."/>
            <person name="Hosono S."/>
            <person name="Sato T."/>
            <person name="Takeuchi M."/>
            <person name="Kobayashi Y."/>
        </authorList>
    </citation>
    <scope>NUCLEOTIDE SEQUENCE [GENOMIC DNA]</scope>
    <source>
        <strain>168 / JH642</strain>
    </source>
</reference>
<reference key="2">
    <citation type="journal article" date="1997" name="Nature">
        <title>The complete genome sequence of the Gram-positive bacterium Bacillus subtilis.</title>
        <authorList>
            <person name="Kunst F."/>
            <person name="Ogasawara N."/>
            <person name="Moszer I."/>
            <person name="Albertini A.M."/>
            <person name="Alloni G."/>
            <person name="Azevedo V."/>
            <person name="Bertero M.G."/>
            <person name="Bessieres P."/>
            <person name="Bolotin A."/>
            <person name="Borchert S."/>
            <person name="Borriss R."/>
            <person name="Boursier L."/>
            <person name="Brans A."/>
            <person name="Braun M."/>
            <person name="Brignell S.C."/>
            <person name="Bron S."/>
            <person name="Brouillet S."/>
            <person name="Bruschi C.V."/>
            <person name="Caldwell B."/>
            <person name="Capuano V."/>
            <person name="Carter N.M."/>
            <person name="Choi S.-K."/>
            <person name="Codani J.-J."/>
            <person name="Connerton I.F."/>
            <person name="Cummings N.J."/>
            <person name="Daniel R.A."/>
            <person name="Denizot F."/>
            <person name="Devine K.M."/>
            <person name="Duesterhoeft A."/>
            <person name="Ehrlich S.D."/>
            <person name="Emmerson P.T."/>
            <person name="Entian K.-D."/>
            <person name="Errington J."/>
            <person name="Fabret C."/>
            <person name="Ferrari E."/>
            <person name="Foulger D."/>
            <person name="Fritz C."/>
            <person name="Fujita M."/>
            <person name="Fujita Y."/>
            <person name="Fuma S."/>
            <person name="Galizzi A."/>
            <person name="Galleron N."/>
            <person name="Ghim S.-Y."/>
            <person name="Glaser P."/>
            <person name="Goffeau A."/>
            <person name="Golightly E.J."/>
            <person name="Grandi G."/>
            <person name="Guiseppi G."/>
            <person name="Guy B.J."/>
            <person name="Haga K."/>
            <person name="Haiech J."/>
            <person name="Harwood C.R."/>
            <person name="Henaut A."/>
            <person name="Hilbert H."/>
            <person name="Holsappel S."/>
            <person name="Hosono S."/>
            <person name="Hullo M.-F."/>
            <person name="Itaya M."/>
            <person name="Jones L.-M."/>
            <person name="Joris B."/>
            <person name="Karamata D."/>
            <person name="Kasahara Y."/>
            <person name="Klaerr-Blanchard M."/>
            <person name="Klein C."/>
            <person name="Kobayashi Y."/>
            <person name="Koetter P."/>
            <person name="Koningstein G."/>
            <person name="Krogh S."/>
            <person name="Kumano M."/>
            <person name="Kurita K."/>
            <person name="Lapidus A."/>
            <person name="Lardinois S."/>
            <person name="Lauber J."/>
            <person name="Lazarevic V."/>
            <person name="Lee S.-M."/>
            <person name="Levine A."/>
            <person name="Liu H."/>
            <person name="Masuda S."/>
            <person name="Mauel C."/>
            <person name="Medigue C."/>
            <person name="Medina N."/>
            <person name="Mellado R.P."/>
            <person name="Mizuno M."/>
            <person name="Moestl D."/>
            <person name="Nakai S."/>
            <person name="Noback M."/>
            <person name="Noone D."/>
            <person name="O'Reilly M."/>
            <person name="Ogawa K."/>
            <person name="Ogiwara A."/>
            <person name="Oudega B."/>
            <person name="Park S.-H."/>
            <person name="Parro V."/>
            <person name="Pohl T.M."/>
            <person name="Portetelle D."/>
            <person name="Porwollik S."/>
            <person name="Prescott A.M."/>
            <person name="Presecan E."/>
            <person name="Pujic P."/>
            <person name="Purnelle B."/>
            <person name="Rapoport G."/>
            <person name="Rey M."/>
            <person name="Reynolds S."/>
            <person name="Rieger M."/>
            <person name="Rivolta C."/>
            <person name="Rocha E."/>
            <person name="Roche B."/>
            <person name="Rose M."/>
            <person name="Sadaie Y."/>
            <person name="Sato T."/>
            <person name="Scanlan E."/>
            <person name="Schleich S."/>
            <person name="Schroeter R."/>
            <person name="Scoffone F."/>
            <person name="Sekiguchi J."/>
            <person name="Sekowska A."/>
            <person name="Seror S.J."/>
            <person name="Serror P."/>
            <person name="Shin B.-S."/>
            <person name="Soldo B."/>
            <person name="Sorokin A."/>
            <person name="Tacconi E."/>
            <person name="Takagi T."/>
            <person name="Takahashi H."/>
            <person name="Takemaru K."/>
            <person name="Takeuchi M."/>
            <person name="Tamakoshi A."/>
            <person name="Tanaka T."/>
            <person name="Terpstra P."/>
            <person name="Tognoni A."/>
            <person name="Tosato V."/>
            <person name="Uchiyama S."/>
            <person name="Vandenbol M."/>
            <person name="Vannier F."/>
            <person name="Vassarotti A."/>
            <person name="Viari A."/>
            <person name="Wambutt R."/>
            <person name="Wedler E."/>
            <person name="Wedler H."/>
            <person name="Weitzenegger T."/>
            <person name="Winters P."/>
            <person name="Wipat A."/>
            <person name="Yamamoto H."/>
            <person name="Yamane K."/>
            <person name="Yasumoto K."/>
            <person name="Yata K."/>
            <person name="Yoshida K."/>
            <person name="Yoshikawa H.-F."/>
            <person name="Zumstein E."/>
            <person name="Yoshikawa H."/>
            <person name="Danchin A."/>
        </authorList>
    </citation>
    <scope>NUCLEOTIDE SEQUENCE [LARGE SCALE GENOMIC DNA]</scope>
    <source>
        <strain>168</strain>
    </source>
</reference>
<reference key="3">
    <citation type="journal article" date="2001" name="J. Bacteriol.">
        <title>Comprehensive DNA microarray analysis of Bacillus subtilis two-component regulatory systems.</title>
        <authorList>
            <person name="Kobayashi K."/>
            <person name="Ogura M."/>
            <person name="Yamaguchi H."/>
            <person name="Yoshida K."/>
            <person name="Ogasawara N."/>
            <person name="Tanaka T."/>
            <person name="Fujita Y."/>
        </authorList>
    </citation>
    <scope>FUNCTION</scope>
</reference>
<protein>
    <recommendedName>
        <fullName>Uncharacterized transcriptional regulatory protein YrkP</fullName>
    </recommendedName>
</protein>
<name>YRKP_BACSU</name>
<proteinExistence type="inferred from homology"/>
<dbReference type="EMBL" id="D84432">
    <property type="protein sequence ID" value="BAA12371.1"/>
    <property type="molecule type" value="Genomic_DNA"/>
</dbReference>
<dbReference type="EMBL" id="AL009126">
    <property type="protein sequence ID" value="CAB14584.1"/>
    <property type="molecule type" value="Genomic_DNA"/>
</dbReference>
<dbReference type="PIR" id="F69977">
    <property type="entry name" value="F69977"/>
</dbReference>
<dbReference type="RefSeq" id="NP_390520.1">
    <property type="nucleotide sequence ID" value="NC_000964.3"/>
</dbReference>
<dbReference type="RefSeq" id="WP_003229895.1">
    <property type="nucleotide sequence ID" value="NZ_OZ025638.1"/>
</dbReference>
<dbReference type="SMR" id="P54443"/>
<dbReference type="FunCoup" id="P54443">
    <property type="interactions" value="15"/>
</dbReference>
<dbReference type="STRING" id="224308.BSU26430"/>
<dbReference type="PaxDb" id="224308-BSU26430"/>
<dbReference type="EnsemblBacteria" id="CAB14584">
    <property type="protein sequence ID" value="CAB14584"/>
    <property type="gene ID" value="BSU_26430"/>
</dbReference>
<dbReference type="GeneID" id="937663"/>
<dbReference type="KEGG" id="bsu:BSU26430"/>
<dbReference type="PATRIC" id="fig|224308.179.peg.2871"/>
<dbReference type="eggNOG" id="COG0745">
    <property type="taxonomic scope" value="Bacteria"/>
</dbReference>
<dbReference type="InParanoid" id="P54443"/>
<dbReference type="OrthoDB" id="9790442at2"/>
<dbReference type="PhylomeDB" id="P54443"/>
<dbReference type="BioCyc" id="BSUB:BSU26430-MONOMER"/>
<dbReference type="Proteomes" id="UP000001570">
    <property type="component" value="Chromosome"/>
</dbReference>
<dbReference type="GO" id="GO:0005829">
    <property type="term" value="C:cytosol"/>
    <property type="evidence" value="ECO:0000318"/>
    <property type="project" value="GO_Central"/>
</dbReference>
<dbReference type="GO" id="GO:0032993">
    <property type="term" value="C:protein-DNA complex"/>
    <property type="evidence" value="ECO:0000318"/>
    <property type="project" value="GO_Central"/>
</dbReference>
<dbReference type="GO" id="GO:0000156">
    <property type="term" value="F:phosphorelay response regulator activity"/>
    <property type="evidence" value="ECO:0000318"/>
    <property type="project" value="GO_Central"/>
</dbReference>
<dbReference type="GO" id="GO:0000976">
    <property type="term" value="F:transcription cis-regulatory region binding"/>
    <property type="evidence" value="ECO:0000318"/>
    <property type="project" value="GO_Central"/>
</dbReference>
<dbReference type="GO" id="GO:0006355">
    <property type="term" value="P:regulation of DNA-templated transcription"/>
    <property type="evidence" value="ECO:0000318"/>
    <property type="project" value="GO_Central"/>
</dbReference>
<dbReference type="CDD" id="cd17574">
    <property type="entry name" value="REC_OmpR"/>
    <property type="match status" value="1"/>
</dbReference>
<dbReference type="CDD" id="cd00383">
    <property type="entry name" value="trans_reg_C"/>
    <property type="match status" value="1"/>
</dbReference>
<dbReference type="FunFam" id="3.40.50.2300:FF:000001">
    <property type="entry name" value="DNA-binding response regulator PhoB"/>
    <property type="match status" value="1"/>
</dbReference>
<dbReference type="FunFam" id="1.10.10.10:FF:001125">
    <property type="entry name" value="Two-component response regulator YrkQ"/>
    <property type="match status" value="1"/>
</dbReference>
<dbReference type="Gene3D" id="3.40.50.2300">
    <property type="match status" value="1"/>
</dbReference>
<dbReference type="Gene3D" id="6.10.250.690">
    <property type="match status" value="1"/>
</dbReference>
<dbReference type="Gene3D" id="1.10.10.10">
    <property type="entry name" value="Winged helix-like DNA-binding domain superfamily/Winged helix DNA-binding domain"/>
    <property type="match status" value="1"/>
</dbReference>
<dbReference type="InterPro" id="IPR011006">
    <property type="entry name" value="CheY-like_superfamily"/>
</dbReference>
<dbReference type="InterPro" id="IPR001867">
    <property type="entry name" value="OmpR/PhoB-type_DNA-bd"/>
</dbReference>
<dbReference type="InterPro" id="IPR016032">
    <property type="entry name" value="Sig_transdc_resp-reg_C-effctor"/>
</dbReference>
<dbReference type="InterPro" id="IPR001789">
    <property type="entry name" value="Sig_transdc_resp-reg_receiver"/>
</dbReference>
<dbReference type="InterPro" id="IPR039420">
    <property type="entry name" value="WalR-like"/>
</dbReference>
<dbReference type="InterPro" id="IPR036388">
    <property type="entry name" value="WH-like_DNA-bd_sf"/>
</dbReference>
<dbReference type="PANTHER" id="PTHR48111">
    <property type="entry name" value="REGULATOR OF RPOS"/>
    <property type="match status" value="1"/>
</dbReference>
<dbReference type="PANTHER" id="PTHR48111:SF2">
    <property type="entry name" value="RESPONSE REGULATOR SAER"/>
    <property type="match status" value="1"/>
</dbReference>
<dbReference type="Pfam" id="PF00072">
    <property type="entry name" value="Response_reg"/>
    <property type="match status" value="1"/>
</dbReference>
<dbReference type="Pfam" id="PF00486">
    <property type="entry name" value="Trans_reg_C"/>
    <property type="match status" value="1"/>
</dbReference>
<dbReference type="SMART" id="SM00448">
    <property type="entry name" value="REC"/>
    <property type="match status" value="1"/>
</dbReference>
<dbReference type="SMART" id="SM00862">
    <property type="entry name" value="Trans_reg_C"/>
    <property type="match status" value="1"/>
</dbReference>
<dbReference type="SUPFAM" id="SSF46894">
    <property type="entry name" value="C-terminal effector domain of the bipartite response regulators"/>
    <property type="match status" value="1"/>
</dbReference>
<dbReference type="SUPFAM" id="SSF52172">
    <property type="entry name" value="CheY-like"/>
    <property type="match status" value="1"/>
</dbReference>
<dbReference type="PROSITE" id="PS51755">
    <property type="entry name" value="OMPR_PHOB"/>
    <property type="match status" value="1"/>
</dbReference>
<dbReference type="PROSITE" id="PS50110">
    <property type="entry name" value="RESPONSE_REGULATORY"/>
    <property type="match status" value="1"/>
</dbReference>
<sequence length="231" mass="26795">MAYRILVVEDDEDIGDLLEESLTRAGYEVLRAKDGKRALQLVNDSLDLVILDIMMPGISGIETCQHIRKSSNVPILFLTARSSTLDKTEGLLAGGDDYMTKPFSEEELHARVIAQLRRYTIYQEKKEQEETFLIGGKLRVSEEFNEVWKEEKQIKLSDLEYRILKLLMNKRNKIFSAQNIYESVWGQPYFYCSNNTVMVHIRKLRSKIEDDPARPVYIKTEWGRGYRFGAS</sequence>
<organism>
    <name type="scientific">Bacillus subtilis (strain 168)</name>
    <dbReference type="NCBI Taxonomy" id="224308"/>
    <lineage>
        <taxon>Bacteria</taxon>
        <taxon>Bacillati</taxon>
        <taxon>Bacillota</taxon>
        <taxon>Bacilli</taxon>
        <taxon>Bacillales</taxon>
        <taxon>Bacillaceae</taxon>
        <taxon>Bacillus</taxon>
    </lineage>
</organism>
<comment type="function">
    <text evidence="3">Member of the two-component regulatory system YrkQ/YrkP.</text>
</comment>
<comment type="subcellular location">
    <subcellularLocation>
        <location evidence="4">Cytoplasm</location>
    </subcellularLocation>
</comment>
<comment type="PTM">
    <text evidence="4">Phosphorylated by YrkQ.</text>
</comment>
<keyword id="KW-0963">Cytoplasm</keyword>
<keyword id="KW-0238">DNA-binding</keyword>
<keyword id="KW-0597">Phosphoprotein</keyword>
<keyword id="KW-1185">Reference proteome</keyword>
<keyword id="KW-0804">Transcription</keyword>
<keyword id="KW-0805">Transcription regulation</keyword>
<keyword id="KW-0902">Two-component regulatory system</keyword>